<organism>
    <name type="scientific">Xanthomonas oryzae pv. oryzae (strain PXO99A)</name>
    <dbReference type="NCBI Taxonomy" id="360094"/>
    <lineage>
        <taxon>Bacteria</taxon>
        <taxon>Pseudomonadati</taxon>
        <taxon>Pseudomonadota</taxon>
        <taxon>Gammaproteobacteria</taxon>
        <taxon>Lysobacterales</taxon>
        <taxon>Lysobacteraceae</taxon>
        <taxon>Xanthomonas</taxon>
    </lineage>
</organism>
<sequence>MSQALTLARPYGRAAFAIAREGGTFAPWSDALAFSAQVAGDPRVAALLLNPALGQEQAVTLLAPPQAGEDYLCFLGVLADAQRLSLLPEVAGLYEHLRAEAEHVVKATVTSAAAMSQTELDTIAAALKKRFGRDVDITTAVDASLIGGAVIDTGDVVIDGSLKGKLARLQSSLAH</sequence>
<dbReference type="EMBL" id="CP000967">
    <property type="protein sequence ID" value="ACD61111.1"/>
    <property type="molecule type" value="Genomic_DNA"/>
</dbReference>
<dbReference type="RefSeq" id="WP_012446137.1">
    <property type="nucleotide sequence ID" value="NC_010717.2"/>
</dbReference>
<dbReference type="SMR" id="B2SQB3"/>
<dbReference type="KEGG" id="xop:PXO_03110"/>
<dbReference type="eggNOG" id="COG0712">
    <property type="taxonomic scope" value="Bacteria"/>
</dbReference>
<dbReference type="HOGENOM" id="CLU_085114_3_0_6"/>
<dbReference type="Proteomes" id="UP000001740">
    <property type="component" value="Chromosome"/>
</dbReference>
<dbReference type="GO" id="GO:0005886">
    <property type="term" value="C:plasma membrane"/>
    <property type="evidence" value="ECO:0007669"/>
    <property type="project" value="UniProtKB-SubCell"/>
</dbReference>
<dbReference type="GO" id="GO:0045259">
    <property type="term" value="C:proton-transporting ATP synthase complex"/>
    <property type="evidence" value="ECO:0007669"/>
    <property type="project" value="UniProtKB-KW"/>
</dbReference>
<dbReference type="GO" id="GO:0046933">
    <property type="term" value="F:proton-transporting ATP synthase activity, rotational mechanism"/>
    <property type="evidence" value="ECO:0007669"/>
    <property type="project" value="UniProtKB-UniRule"/>
</dbReference>
<dbReference type="Gene3D" id="1.10.520.20">
    <property type="entry name" value="N-terminal domain of the delta subunit of the F1F0-ATP synthase"/>
    <property type="match status" value="1"/>
</dbReference>
<dbReference type="HAMAP" id="MF_01416">
    <property type="entry name" value="ATP_synth_delta_bact"/>
    <property type="match status" value="1"/>
</dbReference>
<dbReference type="InterPro" id="IPR026015">
    <property type="entry name" value="ATP_synth_OSCP/delta_N_sf"/>
</dbReference>
<dbReference type="InterPro" id="IPR000711">
    <property type="entry name" value="ATPase_OSCP/dsu"/>
</dbReference>
<dbReference type="NCBIfam" id="TIGR01145">
    <property type="entry name" value="ATP_synt_delta"/>
    <property type="match status" value="1"/>
</dbReference>
<dbReference type="NCBIfam" id="NF004402">
    <property type="entry name" value="PRK05758.2-2"/>
    <property type="match status" value="1"/>
</dbReference>
<dbReference type="PANTHER" id="PTHR11910">
    <property type="entry name" value="ATP SYNTHASE DELTA CHAIN"/>
    <property type="match status" value="1"/>
</dbReference>
<dbReference type="Pfam" id="PF00213">
    <property type="entry name" value="OSCP"/>
    <property type="match status" value="1"/>
</dbReference>
<dbReference type="PRINTS" id="PR00125">
    <property type="entry name" value="ATPASEDELTA"/>
</dbReference>
<dbReference type="SUPFAM" id="SSF47928">
    <property type="entry name" value="N-terminal domain of the delta subunit of the F1F0-ATP synthase"/>
    <property type="match status" value="1"/>
</dbReference>
<comment type="function">
    <text evidence="1">F(1)F(0) ATP synthase produces ATP from ADP in the presence of a proton or sodium gradient. F-type ATPases consist of two structural domains, F(1) containing the extramembraneous catalytic core and F(0) containing the membrane proton channel, linked together by a central stalk and a peripheral stalk. During catalysis, ATP synthesis in the catalytic domain of F(1) is coupled via a rotary mechanism of the central stalk subunits to proton translocation.</text>
</comment>
<comment type="function">
    <text evidence="1">This protein is part of the stalk that links CF(0) to CF(1). It either transmits conformational changes from CF(0) to CF(1) or is implicated in proton conduction.</text>
</comment>
<comment type="subunit">
    <text evidence="1">F-type ATPases have 2 components, F(1) - the catalytic core - and F(0) - the membrane proton channel. F(1) has five subunits: alpha(3), beta(3), gamma(1), delta(1), epsilon(1). F(0) has three main subunits: a(1), b(2) and c(10-14). The alpha and beta chains form an alternating ring which encloses part of the gamma chain. F(1) is attached to F(0) by a central stalk formed by the gamma and epsilon chains, while a peripheral stalk is formed by the delta and b chains.</text>
</comment>
<comment type="subcellular location">
    <subcellularLocation>
        <location evidence="1">Cell inner membrane</location>
        <topology evidence="1">Peripheral membrane protein</topology>
    </subcellularLocation>
</comment>
<comment type="similarity">
    <text evidence="1">Belongs to the ATPase delta chain family.</text>
</comment>
<accession>B2SQB3</accession>
<name>ATPD_XANOP</name>
<feature type="chain" id="PRO_1000184838" description="ATP synthase subunit delta">
    <location>
        <begin position="1"/>
        <end position="175"/>
    </location>
</feature>
<keyword id="KW-0066">ATP synthesis</keyword>
<keyword id="KW-0997">Cell inner membrane</keyword>
<keyword id="KW-1003">Cell membrane</keyword>
<keyword id="KW-0139">CF(1)</keyword>
<keyword id="KW-0375">Hydrogen ion transport</keyword>
<keyword id="KW-0406">Ion transport</keyword>
<keyword id="KW-0472">Membrane</keyword>
<keyword id="KW-0813">Transport</keyword>
<gene>
    <name evidence="1" type="primary">atpH</name>
    <name type="ordered locus">PXO_03110</name>
</gene>
<evidence type="ECO:0000255" key="1">
    <source>
        <dbReference type="HAMAP-Rule" id="MF_01416"/>
    </source>
</evidence>
<proteinExistence type="inferred from homology"/>
<reference key="1">
    <citation type="journal article" date="2008" name="BMC Genomics">
        <title>Genome sequence and rapid evolution of the rice pathogen Xanthomonas oryzae pv. oryzae PXO99A.</title>
        <authorList>
            <person name="Salzberg S.L."/>
            <person name="Sommer D.D."/>
            <person name="Schatz M.C."/>
            <person name="Phillippy A.M."/>
            <person name="Rabinowicz P.D."/>
            <person name="Tsuge S."/>
            <person name="Furutani A."/>
            <person name="Ochiai H."/>
            <person name="Delcher A.L."/>
            <person name="Kelley D."/>
            <person name="Madupu R."/>
            <person name="Puiu D."/>
            <person name="Radune D."/>
            <person name="Shumway M."/>
            <person name="Trapnell C."/>
            <person name="Aparna G."/>
            <person name="Jha G."/>
            <person name="Pandey A."/>
            <person name="Patil P.B."/>
            <person name="Ishihara H."/>
            <person name="Meyer D.F."/>
            <person name="Szurek B."/>
            <person name="Verdier V."/>
            <person name="Koebnik R."/>
            <person name="Dow J.M."/>
            <person name="Ryan R.P."/>
            <person name="Hirata H."/>
            <person name="Tsuyumu S."/>
            <person name="Won Lee S."/>
            <person name="Seo Y.-S."/>
            <person name="Sriariyanum M."/>
            <person name="Ronald P.C."/>
            <person name="Sonti R.V."/>
            <person name="Van Sluys M.-A."/>
            <person name="Leach J.E."/>
            <person name="White F.F."/>
            <person name="Bogdanove A.J."/>
        </authorList>
    </citation>
    <scope>NUCLEOTIDE SEQUENCE [LARGE SCALE GENOMIC DNA]</scope>
    <source>
        <strain>PXO99A</strain>
    </source>
</reference>
<protein>
    <recommendedName>
        <fullName evidence="1">ATP synthase subunit delta</fullName>
    </recommendedName>
    <alternativeName>
        <fullName evidence="1">ATP synthase F(1) sector subunit delta</fullName>
    </alternativeName>
    <alternativeName>
        <fullName evidence="1">F-type ATPase subunit delta</fullName>
        <shortName evidence="1">F-ATPase subunit delta</shortName>
    </alternativeName>
</protein>